<dbReference type="EC" id="5.3.1.1" evidence="1"/>
<dbReference type="EMBL" id="AE017226">
    <property type="protein sequence ID" value="AAS11754.1"/>
    <property type="molecule type" value="Genomic_DNA"/>
</dbReference>
<dbReference type="RefSeq" id="NP_971843.1">
    <property type="nucleotide sequence ID" value="NC_002967.9"/>
</dbReference>
<dbReference type="RefSeq" id="WP_002678731.1">
    <property type="nucleotide sequence ID" value="NC_002967.9"/>
</dbReference>
<dbReference type="SMR" id="Q73NB9"/>
<dbReference type="STRING" id="243275.TDE_1236"/>
<dbReference type="PaxDb" id="243275-TDE_1236"/>
<dbReference type="GeneID" id="2741178"/>
<dbReference type="KEGG" id="tde:TDE_1236"/>
<dbReference type="PATRIC" id="fig|243275.7.peg.1189"/>
<dbReference type="eggNOG" id="COG0149">
    <property type="taxonomic scope" value="Bacteria"/>
</dbReference>
<dbReference type="HOGENOM" id="CLU_024251_2_3_12"/>
<dbReference type="OrthoDB" id="9809429at2"/>
<dbReference type="UniPathway" id="UPA00109">
    <property type="reaction ID" value="UER00189"/>
</dbReference>
<dbReference type="UniPathway" id="UPA00138"/>
<dbReference type="Proteomes" id="UP000008212">
    <property type="component" value="Chromosome"/>
</dbReference>
<dbReference type="GO" id="GO:0005829">
    <property type="term" value="C:cytosol"/>
    <property type="evidence" value="ECO:0007669"/>
    <property type="project" value="TreeGrafter"/>
</dbReference>
<dbReference type="GO" id="GO:0004807">
    <property type="term" value="F:triose-phosphate isomerase activity"/>
    <property type="evidence" value="ECO:0007669"/>
    <property type="project" value="UniProtKB-UniRule"/>
</dbReference>
<dbReference type="GO" id="GO:0006094">
    <property type="term" value="P:gluconeogenesis"/>
    <property type="evidence" value="ECO:0007669"/>
    <property type="project" value="UniProtKB-UniRule"/>
</dbReference>
<dbReference type="GO" id="GO:0046166">
    <property type="term" value="P:glyceraldehyde-3-phosphate biosynthetic process"/>
    <property type="evidence" value="ECO:0007669"/>
    <property type="project" value="TreeGrafter"/>
</dbReference>
<dbReference type="GO" id="GO:0019563">
    <property type="term" value="P:glycerol catabolic process"/>
    <property type="evidence" value="ECO:0007669"/>
    <property type="project" value="TreeGrafter"/>
</dbReference>
<dbReference type="GO" id="GO:0006096">
    <property type="term" value="P:glycolytic process"/>
    <property type="evidence" value="ECO:0007669"/>
    <property type="project" value="UniProtKB-UniRule"/>
</dbReference>
<dbReference type="CDD" id="cd00311">
    <property type="entry name" value="TIM"/>
    <property type="match status" value="1"/>
</dbReference>
<dbReference type="FunFam" id="3.20.20.70:FF:000016">
    <property type="entry name" value="Triosephosphate isomerase"/>
    <property type="match status" value="1"/>
</dbReference>
<dbReference type="Gene3D" id="3.20.20.70">
    <property type="entry name" value="Aldolase class I"/>
    <property type="match status" value="1"/>
</dbReference>
<dbReference type="HAMAP" id="MF_00147_B">
    <property type="entry name" value="TIM_B"/>
    <property type="match status" value="1"/>
</dbReference>
<dbReference type="InterPro" id="IPR013785">
    <property type="entry name" value="Aldolase_TIM"/>
</dbReference>
<dbReference type="InterPro" id="IPR035990">
    <property type="entry name" value="TIM_sf"/>
</dbReference>
<dbReference type="InterPro" id="IPR022896">
    <property type="entry name" value="TrioseP_Isoase_bac/euk"/>
</dbReference>
<dbReference type="InterPro" id="IPR000652">
    <property type="entry name" value="Triosephosphate_isomerase"/>
</dbReference>
<dbReference type="InterPro" id="IPR020861">
    <property type="entry name" value="Triosephosphate_isomerase_AS"/>
</dbReference>
<dbReference type="NCBIfam" id="TIGR00419">
    <property type="entry name" value="tim"/>
    <property type="match status" value="1"/>
</dbReference>
<dbReference type="PANTHER" id="PTHR21139">
    <property type="entry name" value="TRIOSEPHOSPHATE ISOMERASE"/>
    <property type="match status" value="1"/>
</dbReference>
<dbReference type="PANTHER" id="PTHR21139:SF42">
    <property type="entry name" value="TRIOSEPHOSPHATE ISOMERASE"/>
    <property type="match status" value="1"/>
</dbReference>
<dbReference type="Pfam" id="PF00121">
    <property type="entry name" value="TIM"/>
    <property type="match status" value="1"/>
</dbReference>
<dbReference type="SUPFAM" id="SSF51351">
    <property type="entry name" value="Triosephosphate isomerase (TIM)"/>
    <property type="match status" value="1"/>
</dbReference>
<dbReference type="PROSITE" id="PS00171">
    <property type="entry name" value="TIM_1"/>
    <property type="match status" value="1"/>
</dbReference>
<dbReference type="PROSITE" id="PS51440">
    <property type="entry name" value="TIM_2"/>
    <property type="match status" value="1"/>
</dbReference>
<gene>
    <name evidence="1" type="primary">tpiA</name>
    <name type="ordered locus">TDE_1236</name>
</gene>
<proteinExistence type="inferred from homology"/>
<keyword id="KW-0963">Cytoplasm</keyword>
<keyword id="KW-0312">Gluconeogenesis</keyword>
<keyword id="KW-0324">Glycolysis</keyword>
<keyword id="KW-0413">Isomerase</keyword>
<keyword id="KW-1185">Reference proteome</keyword>
<feature type="chain" id="PRO_0000307593" description="Triosephosphate isomerase">
    <location>
        <begin position="1"/>
        <end position="250"/>
    </location>
</feature>
<feature type="active site" description="Electrophile" evidence="1">
    <location>
        <position position="94"/>
    </location>
</feature>
<feature type="active site" description="Proton acceptor" evidence="1">
    <location>
        <position position="166"/>
    </location>
</feature>
<feature type="binding site" evidence="1">
    <location>
        <begin position="9"/>
        <end position="11"/>
    </location>
    <ligand>
        <name>substrate</name>
    </ligand>
</feature>
<feature type="binding site" evidence="1">
    <location>
        <position position="172"/>
    </location>
    <ligand>
        <name>substrate</name>
    </ligand>
</feature>
<feature type="binding site" evidence="1">
    <location>
        <position position="212"/>
    </location>
    <ligand>
        <name>substrate</name>
    </ligand>
</feature>
<feature type="binding site" evidence="1">
    <location>
        <begin position="233"/>
        <end position="234"/>
    </location>
    <ligand>
        <name>substrate</name>
    </ligand>
</feature>
<accession>Q73NB9</accession>
<protein>
    <recommendedName>
        <fullName evidence="1">Triosephosphate isomerase</fullName>
        <shortName evidence="1">TIM</shortName>
        <shortName evidence="1">TPI</shortName>
        <ecNumber evidence="1">5.3.1.1</ecNumber>
    </recommendedName>
    <alternativeName>
        <fullName evidence="1">Triose-phosphate isomerase</fullName>
    </alternativeName>
</protein>
<organism>
    <name type="scientific">Treponema denticola (strain ATCC 35405 / DSM 14222 / CIP 103919 / JCM 8153 / KCTC 15104)</name>
    <dbReference type="NCBI Taxonomy" id="243275"/>
    <lineage>
        <taxon>Bacteria</taxon>
        <taxon>Pseudomonadati</taxon>
        <taxon>Spirochaetota</taxon>
        <taxon>Spirochaetia</taxon>
        <taxon>Spirochaetales</taxon>
        <taxon>Treponemataceae</taxon>
        <taxon>Treponema</taxon>
    </lineage>
</organism>
<evidence type="ECO:0000255" key="1">
    <source>
        <dbReference type="HAMAP-Rule" id="MF_00147"/>
    </source>
</evidence>
<name>TPIS_TREDE</name>
<sequence length="250" mass="27034">MKKFYIAANWKMNMNRAEAKQLATEMKAGLKDGKNKYMIAPSFTLLQDVASVLKGSNILLGAQNMGLEEKGAHTGEVSVLQLLDVGVQAVILGHSERRHIYKETDDLINKKVKLALKHGLEVILCVGELLEEREAGHAEAVCERQIKKGLAEVSAKDLDKVTIAYEPVWAIGTGKNASPEDADAIHSSIRKTLAALYGEKAAKNMIIQYGGSMKPENAAGLLKKHNIDGGLIGGAGLKTETFLPIALFSE</sequence>
<reference key="1">
    <citation type="journal article" date="2004" name="Proc. Natl. Acad. Sci. U.S.A.">
        <title>Comparison of the genome of the oral pathogen Treponema denticola with other spirochete genomes.</title>
        <authorList>
            <person name="Seshadri R."/>
            <person name="Myers G.S.A."/>
            <person name="Tettelin H."/>
            <person name="Eisen J.A."/>
            <person name="Heidelberg J.F."/>
            <person name="Dodson R.J."/>
            <person name="Davidsen T.M."/>
            <person name="DeBoy R.T."/>
            <person name="Fouts D.E."/>
            <person name="Haft D.H."/>
            <person name="Selengut J."/>
            <person name="Ren Q."/>
            <person name="Brinkac L.M."/>
            <person name="Madupu R."/>
            <person name="Kolonay J.F."/>
            <person name="Durkin S.A."/>
            <person name="Daugherty S.C."/>
            <person name="Shetty J."/>
            <person name="Shvartsbeyn A."/>
            <person name="Gebregeorgis E."/>
            <person name="Geer K."/>
            <person name="Tsegaye G."/>
            <person name="Malek J.A."/>
            <person name="Ayodeji B."/>
            <person name="Shatsman S."/>
            <person name="McLeod M.P."/>
            <person name="Smajs D."/>
            <person name="Howell J.K."/>
            <person name="Pal S."/>
            <person name="Amin A."/>
            <person name="Vashisth P."/>
            <person name="McNeill T.Z."/>
            <person name="Xiang Q."/>
            <person name="Sodergren E."/>
            <person name="Baca E."/>
            <person name="Weinstock G.M."/>
            <person name="Norris S.J."/>
            <person name="Fraser C.M."/>
            <person name="Paulsen I.T."/>
        </authorList>
    </citation>
    <scope>NUCLEOTIDE SEQUENCE [LARGE SCALE GENOMIC DNA]</scope>
    <source>
        <strain>ATCC 35405 / DSM 14222 / CIP 103919 / JCM 8153 / KCTC 15104</strain>
    </source>
</reference>
<comment type="function">
    <text evidence="1">Involved in the gluconeogenesis. Catalyzes stereospecifically the conversion of dihydroxyacetone phosphate (DHAP) to D-glyceraldehyde-3-phosphate (G3P).</text>
</comment>
<comment type="catalytic activity">
    <reaction evidence="1">
        <text>D-glyceraldehyde 3-phosphate = dihydroxyacetone phosphate</text>
        <dbReference type="Rhea" id="RHEA:18585"/>
        <dbReference type="ChEBI" id="CHEBI:57642"/>
        <dbReference type="ChEBI" id="CHEBI:59776"/>
        <dbReference type="EC" id="5.3.1.1"/>
    </reaction>
</comment>
<comment type="pathway">
    <text evidence="1">Carbohydrate biosynthesis; gluconeogenesis.</text>
</comment>
<comment type="pathway">
    <text evidence="1">Carbohydrate degradation; glycolysis; D-glyceraldehyde 3-phosphate from glycerone phosphate: step 1/1.</text>
</comment>
<comment type="subunit">
    <text evidence="1">Homodimer.</text>
</comment>
<comment type="subcellular location">
    <subcellularLocation>
        <location evidence="1">Cytoplasm</location>
    </subcellularLocation>
</comment>
<comment type="similarity">
    <text evidence="1">Belongs to the triosephosphate isomerase family.</text>
</comment>